<feature type="chain" id="PRO_0000144262" description="A-type ATP synthase subunit D">
    <location>
        <begin position="1"/>
        <end position="209"/>
    </location>
</feature>
<comment type="function">
    <text evidence="1">Component of the A-type ATP synthase that produces ATP from ADP in the presence of a proton gradient across the membrane.</text>
</comment>
<comment type="subunit">
    <text evidence="1">Has multiple subunits with at least A(3), B(3), C, D, E, F, H, I and proteolipid K(x).</text>
</comment>
<comment type="subcellular location">
    <subcellularLocation>
        <location evidence="1">Cell membrane</location>
        <topology evidence="1">Peripheral membrane protein</topology>
    </subcellularLocation>
</comment>
<comment type="similarity">
    <text evidence="1">Belongs to the V-ATPase D subunit family.</text>
</comment>
<reference key="1">
    <citation type="journal article" date="2000" name="Proc. Natl. Acad. Sci. U.S.A.">
        <title>Archaeal adaptation to higher temperatures revealed by genomic sequence of Thermoplasma volcanium.</title>
        <authorList>
            <person name="Kawashima T."/>
            <person name="Amano N."/>
            <person name="Koike H."/>
            <person name="Makino S."/>
            <person name="Higuchi S."/>
            <person name="Kawashima-Ohya Y."/>
            <person name="Watanabe K."/>
            <person name="Yamazaki M."/>
            <person name="Kanehori K."/>
            <person name="Kawamoto T."/>
            <person name="Nunoshiba T."/>
            <person name="Yamamoto Y."/>
            <person name="Aramaki H."/>
            <person name="Makino K."/>
            <person name="Suzuki M."/>
        </authorList>
    </citation>
    <scope>NUCLEOTIDE SEQUENCE [LARGE SCALE GENOMIC DNA]</scope>
    <source>
        <strain>ATCC 51530 / DSM 4299 / JCM 9571 / NBRC 15438 / GSS1</strain>
    </source>
</reference>
<keyword id="KW-0066">ATP synthesis</keyword>
<keyword id="KW-1003">Cell membrane</keyword>
<keyword id="KW-0375">Hydrogen ion transport</keyword>
<keyword id="KW-0406">Ion transport</keyword>
<keyword id="KW-0472">Membrane</keyword>
<keyword id="KW-0813">Transport</keyword>
<organism>
    <name type="scientific">Thermoplasma volcanium (strain ATCC 51530 / DSM 4299 / JCM 9571 / NBRC 15438 / GSS1)</name>
    <dbReference type="NCBI Taxonomy" id="273116"/>
    <lineage>
        <taxon>Archaea</taxon>
        <taxon>Methanobacteriati</taxon>
        <taxon>Thermoplasmatota</taxon>
        <taxon>Thermoplasmata</taxon>
        <taxon>Thermoplasmatales</taxon>
        <taxon>Thermoplasmataceae</taxon>
        <taxon>Thermoplasma</taxon>
    </lineage>
</organism>
<sequence>MEIRPTRIELIRTRRRIKLARKGLDLLKMKRSALIYEFLQISRTIRGMRENLRREVEDALNTIRTAEILEGQVALERIANMSSDSTINVDSRNVMGVVIPTLNLTYNLSILSDVYRTISVPVAINDAIDRFQRLFLNLIQILEKENALRNLLIEIDKTKRRSNAIENILIPRLEYQAKMIKMMLDERERDTFTTLKTIKKKIEAGKDEE</sequence>
<accession>Q97CP8</accession>
<dbReference type="EMBL" id="BA000011">
    <property type="protein sequence ID" value="BAB59195.1"/>
    <property type="molecule type" value="Genomic_DNA"/>
</dbReference>
<dbReference type="RefSeq" id="WP_241760290.1">
    <property type="nucleotide sequence ID" value="NC_002689.2"/>
</dbReference>
<dbReference type="SMR" id="Q97CP8"/>
<dbReference type="STRING" id="273116.gene:9380818"/>
<dbReference type="PaxDb" id="273116-14324267"/>
<dbReference type="GeneID" id="1441540"/>
<dbReference type="KEGG" id="tvo:TVG0056269"/>
<dbReference type="eggNOG" id="arCOG04101">
    <property type="taxonomic scope" value="Archaea"/>
</dbReference>
<dbReference type="HOGENOM" id="CLU_069688_2_1_2"/>
<dbReference type="PhylomeDB" id="Q97CP8"/>
<dbReference type="Proteomes" id="UP000001017">
    <property type="component" value="Chromosome"/>
</dbReference>
<dbReference type="GO" id="GO:0005886">
    <property type="term" value="C:plasma membrane"/>
    <property type="evidence" value="ECO:0007669"/>
    <property type="project" value="UniProtKB-SubCell"/>
</dbReference>
<dbReference type="GO" id="GO:0005524">
    <property type="term" value="F:ATP binding"/>
    <property type="evidence" value="ECO:0007669"/>
    <property type="project" value="UniProtKB-UniRule"/>
</dbReference>
<dbReference type="GO" id="GO:0046933">
    <property type="term" value="F:proton-transporting ATP synthase activity, rotational mechanism"/>
    <property type="evidence" value="ECO:0007669"/>
    <property type="project" value="UniProtKB-UniRule"/>
</dbReference>
<dbReference type="GO" id="GO:0046961">
    <property type="term" value="F:proton-transporting ATPase activity, rotational mechanism"/>
    <property type="evidence" value="ECO:0007669"/>
    <property type="project" value="InterPro"/>
</dbReference>
<dbReference type="GO" id="GO:0042777">
    <property type="term" value="P:proton motive force-driven plasma membrane ATP synthesis"/>
    <property type="evidence" value="ECO:0007669"/>
    <property type="project" value="UniProtKB-UniRule"/>
</dbReference>
<dbReference type="Gene3D" id="1.10.287.3240">
    <property type="match status" value="1"/>
</dbReference>
<dbReference type="HAMAP" id="MF_00271">
    <property type="entry name" value="ATP_synth_D_arch"/>
    <property type="match status" value="1"/>
</dbReference>
<dbReference type="InterPro" id="IPR002699">
    <property type="entry name" value="V_ATPase_D"/>
</dbReference>
<dbReference type="NCBIfam" id="NF001545">
    <property type="entry name" value="PRK00373.1-4"/>
    <property type="match status" value="1"/>
</dbReference>
<dbReference type="NCBIfam" id="TIGR00309">
    <property type="entry name" value="V_ATPase_subD"/>
    <property type="match status" value="1"/>
</dbReference>
<dbReference type="PANTHER" id="PTHR11671">
    <property type="entry name" value="V-TYPE ATP SYNTHASE SUBUNIT D"/>
    <property type="match status" value="1"/>
</dbReference>
<dbReference type="Pfam" id="PF01813">
    <property type="entry name" value="ATP-synt_D"/>
    <property type="match status" value="1"/>
</dbReference>
<evidence type="ECO:0000255" key="1">
    <source>
        <dbReference type="HAMAP-Rule" id="MF_00271"/>
    </source>
</evidence>
<gene>
    <name evidence="1" type="primary">atpD</name>
    <name type="ordered locus">TV0053</name>
    <name type="ORF">TVG0056269</name>
</gene>
<name>AATD_THEVO</name>
<proteinExistence type="inferred from homology"/>
<protein>
    <recommendedName>
        <fullName evidence="1">A-type ATP synthase subunit D</fullName>
    </recommendedName>
</protein>